<protein>
    <recommendedName>
        <fullName evidence="1">Small ribosomal subunit protein uS4</fullName>
    </recommendedName>
    <alternativeName>
        <fullName evidence="2">30S ribosomal protein S4</fullName>
    </alternativeName>
</protein>
<feature type="chain" id="PRO_0000132466" description="Small ribosomal subunit protein uS4">
    <location>
        <begin position="1"/>
        <end position="203"/>
    </location>
</feature>
<feature type="domain" description="S4 RNA-binding" evidence="1">
    <location>
        <begin position="93"/>
        <end position="156"/>
    </location>
</feature>
<comment type="function">
    <text evidence="1">One of the primary rRNA binding proteins, it binds directly to 16S rRNA where it nucleates assembly of the body of the 30S subunit.</text>
</comment>
<comment type="function">
    <text evidence="1">With S5 and S12 plays an important role in translational accuracy.</text>
</comment>
<comment type="subunit">
    <text evidence="1">Part of the 30S ribosomal subunit. Contacts protein S5. The interaction surface between S4 and S5 is involved in control of translational fidelity.</text>
</comment>
<comment type="similarity">
    <text evidence="1">Belongs to the universal ribosomal protein uS4 family.</text>
</comment>
<gene>
    <name evidence="1" type="primary">rpsD</name>
    <name type="ordered locus">gbs2096</name>
</gene>
<name>RS4_STRA3</name>
<dbReference type="EMBL" id="AL766856">
    <property type="protein sequence ID" value="CAD47755.1"/>
    <property type="molecule type" value="Genomic_DNA"/>
</dbReference>
<dbReference type="RefSeq" id="WP_000092759.1">
    <property type="nucleotide sequence ID" value="NC_004368.1"/>
</dbReference>
<dbReference type="SMR" id="Q8E2M6"/>
<dbReference type="GeneID" id="66886872"/>
<dbReference type="KEGG" id="san:rpsD"/>
<dbReference type="eggNOG" id="COG0522">
    <property type="taxonomic scope" value="Bacteria"/>
</dbReference>
<dbReference type="HOGENOM" id="CLU_092403_0_1_9"/>
<dbReference type="Proteomes" id="UP000000823">
    <property type="component" value="Chromosome"/>
</dbReference>
<dbReference type="GO" id="GO:0015935">
    <property type="term" value="C:small ribosomal subunit"/>
    <property type="evidence" value="ECO:0007669"/>
    <property type="project" value="InterPro"/>
</dbReference>
<dbReference type="GO" id="GO:0019843">
    <property type="term" value="F:rRNA binding"/>
    <property type="evidence" value="ECO:0007669"/>
    <property type="project" value="UniProtKB-UniRule"/>
</dbReference>
<dbReference type="GO" id="GO:0003735">
    <property type="term" value="F:structural constituent of ribosome"/>
    <property type="evidence" value="ECO:0007669"/>
    <property type="project" value="InterPro"/>
</dbReference>
<dbReference type="GO" id="GO:0042274">
    <property type="term" value="P:ribosomal small subunit biogenesis"/>
    <property type="evidence" value="ECO:0007669"/>
    <property type="project" value="TreeGrafter"/>
</dbReference>
<dbReference type="GO" id="GO:0006412">
    <property type="term" value="P:translation"/>
    <property type="evidence" value="ECO:0007669"/>
    <property type="project" value="UniProtKB-UniRule"/>
</dbReference>
<dbReference type="CDD" id="cd00165">
    <property type="entry name" value="S4"/>
    <property type="match status" value="1"/>
</dbReference>
<dbReference type="FunFam" id="1.10.1050.10:FF:000001">
    <property type="entry name" value="30S ribosomal protein S4"/>
    <property type="match status" value="1"/>
</dbReference>
<dbReference type="FunFam" id="3.10.290.10:FF:000001">
    <property type="entry name" value="30S ribosomal protein S4"/>
    <property type="match status" value="1"/>
</dbReference>
<dbReference type="Gene3D" id="1.10.1050.10">
    <property type="entry name" value="Ribosomal Protein S4 Delta 41, Chain A, domain 1"/>
    <property type="match status" value="1"/>
</dbReference>
<dbReference type="Gene3D" id="3.10.290.10">
    <property type="entry name" value="RNA-binding S4 domain"/>
    <property type="match status" value="1"/>
</dbReference>
<dbReference type="HAMAP" id="MF_01306_B">
    <property type="entry name" value="Ribosomal_uS4_B"/>
    <property type="match status" value="1"/>
</dbReference>
<dbReference type="InterPro" id="IPR022801">
    <property type="entry name" value="Ribosomal_uS4"/>
</dbReference>
<dbReference type="InterPro" id="IPR005709">
    <property type="entry name" value="Ribosomal_uS4_bac-type"/>
</dbReference>
<dbReference type="InterPro" id="IPR018079">
    <property type="entry name" value="Ribosomal_uS4_CS"/>
</dbReference>
<dbReference type="InterPro" id="IPR001912">
    <property type="entry name" value="Ribosomal_uS4_N"/>
</dbReference>
<dbReference type="InterPro" id="IPR002942">
    <property type="entry name" value="S4_RNA-bd"/>
</dbReference>
<dbReference type="InterPro" id="IPR036986">
    <property type="entry name" value="S4_RNA-bd_sf"/>
</dbReference>
<dbReference type="NCBIfam" id="NF003717">
    <property type="entry name" value="PRK05327.1"/>
    <property type="match status" value="1"/>
</dbReference>
<dbReference type="NCBIfam" id="TIGR01017">
    <property type="entry name" value="rpsD_bact"/>
    <property type="match status" value="1"/>
</dbReference>
<dbReference type="PANTHER" id="PTHR11831">
    <property type="entry name" value="30S 40S RIBOSOMAL PROTEIN"/>
    <property type="match status" value="1"/>
</dbReference>
<dbReference type="PANTHER" id="PTHR11831:SF4">
    <property type="entry name" value="SMALL RIBOSOMAL SUBUNIT PROTEIN US4M"/>
    <property type="match status" value="1"/>
</dbReference>
<dbReference type="Pfam" id="PF00163">
    <property type="entry name" value="Ribosomal_S4"/>
    <property type="match status" value="1"/>
</dbReference>
<dbReference type="Pfam" id="PF01479">
    <property type="entry name" value="S4"/>
    <property type="match status" value="1"/>
</dbReference>
<dbReference type="SMART" id="SM01390">
    <property type="entry name" value="Ribosomal_S4"/>
    <property type="match status" value="1"/>
</dbReference>
<dbReference type="SMART" id="SM00363">
    <property type="entry name" value="S4"/>
    <property type="match status" value="1"/>
</dbReference>
<dbReference type="SUPFAM" id="SSF55174">
    <property type="entry name" value="Alpha-L RNA-binding motif"/>
    <property type="match status" value="1"/>
</dbReference>
<dbReference type="PROSITE" id="PS00632">
    <property type="entry name" value="RIBOSOMAL_S4"/>
    <property type="match status" value="1"/>
</dbReference>
<dbReference type="PROSITE" id="PS50889">
    <property type="entry name" value="S4"/>
    <property type="match status" value="1"/>
</dbReference>
<reference key="1">
    <citation type="journal article" date="2002" name="Mol. Microbiol.">
        <title>Genome sequence of Streptococcus agalactiae, a pathogen causing invasive neonatal disease.</title>
        <authorList>
            <person name="Glaser P."/>
            <person name="Rusniok C."/>
            <person name="Buchrieser C."/>
            <person name="Chevalier F."/>
            <person name="Frangeul L."/>
            <person name="Msadek T."/>
            <person name="Zouine M."/>
            <person name="Couve E."/>
            <person name="Lalioui L."/>
            <person name="Poyart C."/>
            <person name="Trieu-Cuot P."/>
            <person name="Kunst F."/>
        </authorList>
    </citation>
    <scope>NUCLEOTIDE SEQUENCE [LARGE SCALE GENOMIC DNA]</scope>
    <source>
        <strain>NEM316</strain>
    </source>
</reference>
<evidence type="ECO:0000255" key="1">
    <source>
        <dbReference type="HAMAP-Rule" id="MF_01306"/>
    </source>
</evidence>
<evidence type="ECO:0000305" key="2"/>
<accession>Q8E2M6</accession>
<proteinExistence type="inferred from homology"/>
<sequence length="203" mass="23067">MSRYTGPSWKQSRRLGLSLTGTGKELARRNYVPGQHGPNNRSKLSEYGLQLAEKQKLRFSYGLGEKQFRNLFVQATKAKEGTLGFNFMVLLERRLDNVVYRLGLATTRRQARQFVNHGHILVDGKRVDIPSYRVTPGQVISVREKSMKVPAILEAVEATLGRPAFVSFDAEKLEGSLTRLPERDEINPEINEALVVEFYNKML</sequence>
<keyword id="KW-0687">Ribonucleoprotein</keyword>
<keyword id="KW-0689">Ribosomal protein</keyword>
<keyword id="KW-0694">RNA-binding</keyword>
<keyword id="KW-0699">rRNA-binding</keyword>
<organism>
    <name type="scientific">Streptococcus agalactiae serotype III (strain NEM316)</name>
    <dbReference type="NCBI Taxonomy" id="211110"/>
    <lineage>
        <taxon>Bacteria</taxon>
        <taxon>Bacillati</taxon>
        <taxon>Bacillota</taxon>
        <taxon>Bacilli</taxon>
        <taxon>Lactobacillales</taxon>
        <taxon>Streptococcaceae</taxon>
        <taxon>Streptococcus</taxon>
    </lineage>
</organism>